<organism>
    <name type="scientific">Escherichia coli (strain K12 / DH10B)</name>
    <dbReference type="NCBI Taxonomy" id="316385"/>
    <lineage>
        <taxon>Bacteria</taxon>
        <taxon>Pseudomonadati</taxon>
        <taxon>Pseudomonadota</taxon>
        <taxon>Gammaproteobacteria</taxon>
        <taxon>Enterobacterales</taxon>
        <taxon>Enterobacteriaceae</taxon>
        <taxon>Escherichia</taxon>
    </lineage>
</organism>
<comment type="function">
    <text evidence="1">An L-glutamate ligase that catalyzes the ATP-dependent post-translational addition of glutamate residues to the C-terminus of ribosomal protein bS6 (RpsF). Is also able to catalyze the synthesis of poly-alpha-glutamate in vitro, via ATP hydrolysis from unprotected glutamate as substrate. The number of glutamate residues added to either RpsF or to poly-alpha-glutamate changes with pH.</text>
</comment>
<comment type="cofactor">
    <cofactor evidence="1">
        <name>Mg(2+)</name>
        <dbReference type="ChEBI" id="CHEBI:18420"/>
    </cofactor>
    <cofactor evidence="1">
        <name>Mn(2+)</name>
        <dbReference type="ChEBI" id="CHEBI:29035"/>
    </cofactor>
    <text evidence="1">Binds 2 magnesium or manganese ions per subunit.</text>
</comment>
<comment type="similarity">
    <text evidence="1">Belongs to the RimK family.</text>
</comment>
<gene>
    <name evidence="1" type="primary">rimK</name>
    <name type="ordered locus">ECDH10B_0922</name>
</gene>
<name>RIMK_ECODH</name>
<feature type="chain" id="PRO_1000146933" description="Ribosomal protein bS6--L-glutamate ligase">
    <location>
        <begin position="1"/>
        <end position="300"/>
    </location>
</feature>
<feature type="domain" description="ATP-grasp" evidence="1">
    <location>
        <begin position="104"/>
        <end position="287"/>
    </location>
</feature>
<feature type="binding site" evidence="1">
    <location>
        <position position="141"/>
    </location>
    <ligand>
        <name>ATP</name>
        <dbReference type="ChEBI" id="CHEBI:30616"/>
    </ligand>
</feature>
<feature type="binding site" evidence="1">
    <location>
        <begin position="178"/>
        <end position="179"/>
    </location>
    <ligand>
        <name>ATP</name>
        <dbReference type="ChEBI" id="CHEBI:30616"/>
    </ligand>
</feature>
<feature type="binding site" evidence="1">
    <location>
        <position position="187"/>
    </location>
    <ligand>
        <name>ATP</name>
        <dbReference type="ChEBI" id="CHEBI:30616"/>
    </ligand>
</feature>
<feature type="binding site" evidence="1">
    <location>
        <begin position="211"/>
        <end position="213"/>
    </location>
    <ligand>
        <name>ATP</name>
        <dbReference type="ChEBI" id="CHEBI:30616"/>
    </ligand>
</feature>
<feature type="binding site" evidence="1">
    <location>
        <position position="248"/>
    </location>
    <ligand>
        <name>Mg(2+)</name>
        <dbReference type="ChEBI" id="CHEBI:18420"/>
        <label>1</label>
    </ligand>
</feature>
<feature type="binding site" evidence="1">
    <location>
        <position position="248"/>
    </location>
    <ligand>
        <name>Mn(2+)</name>
        <dbReference type="ChEBI" id="CHEBI:29035"/>
        <label>1</label>
    </ligand>
</feature>
<feature type="binding site" evidence="1">
    <location>
        <position position="260"/>
    </location>
    <ligand>
        <name>Mg(2+)</name>
        <dbReference type="ChEBI" id="CHEBI:18420"/>
        <label>1</label>
    </ligand>
</feature>
<feature type="binding site" evidence="1">
    <location>
        <position position="260"/>
    </location>
    <ligand>
        <name>Mg(2+)</name>
        <dbReference type="ChEBI" id="CHEBI:18420"/>
        <label>2</label>
    </ligand>
</feature>
<feature type="binding site" evidence="1">
    <location>
        <position position="260"/>
    </location>
    <ligand>
        <name>Mn(2+)</name>
        <dbReference type="ChEBI" id="CHEBI:29035"/>
        <label>1</label>
    </ligand>
</feature>
<feature type="binding site" evidence="1">
    <location>
        <position position="260"/>
    </location>
    <ligand>
        <name>Mn(2+)</name>
        <dbReference type="ChEBI" id="CHEBI:29035"/>
        <label>2</label>
    </ligand>
</feature>
<feature type="binding site" evidence="1">
    <location>
        <position position="262"/>
    </location>
    <ligand>
        <name>Mg(2+)</name>
        <dbReference type="ChEBI" id="CHEBI:18420"/>
        <label>2</label>
    </ligand>
</feature>
<feature type="binding site" evidence="1">
    <location>
        <position position="262"/>
    </location>
    <ligand>
        <name>Mn(2+)</name>
        <dbReference type="ChEBI" id="CHEBI:29035"/>
        <label>2</label>
    </ligand>
</feature>
<dbReference type="EC" id="6.3.2.-" evidence="1"/>
<dbReference type="EMBL" id="CP000948">
    <property type="protein sequence ID" value="ACB02053.1"/>
    <property type="molecule type" value="Genomic_DNA"/>
</dbReference>
<dbReference type="RefSeq" id="WP_000684321.1">
    <property type="nucleotide sequence ID" value="NC_010473.1"/>
</dbReference>
<dbReference type="SMR" id="B1X7Z3"/>
<dbReference type="GeneID" id="93776570"/>
<dbReference type="KEGG" id="ecd:ECDH10B_0922"/>
<dbReference type="HOGENOM" id="CLU_054353_0_1_6"/>
<dbReference type="GO" id="GO:0005737">
    <property type="term" value="C:cytoplasm"/>
    <property type="evidence" value="ECO:0007669"/>
    <property type="project" value="TreeGrafter"/>
</dbReference>
<dbReference type="GO" id="GO:0005524">
    <property type="term" value="F:ATP binding"/>
    <property type="evidence" value="ECO:0007669"/>
    <property type="project" value="UniProtKB-UniRule"/>
</dbReference>
<dbReference type="GO" id="GO:0046872">
    <property type="term" value="F:metal ion binding"/>
    <property type="evidence" value="ECO:0007669"/>
    <property type="project" value="UniProtKB-KW"/>
</dbReference>
<dbReference type="GO" id="GO:0018169">
    <property type="term" value="F:ribosomal S6-glutamic acid ligase activity"/>
    <property type="evidence" value="ECO:0007669"/>
    <property type="project" value="UniProtKB-UniRule"/>
</dbReference>
<dbReference type="GO" id="GO:0036211">
    <property type="term" value="P:protein modification process"/>
    <property type="evidence" value="ECO:0007669"/>
    <property type="project" value="InterPro"/>
</dbReference>
<dbReference type="GO" id="GO:0009432">
    <property type="term" value="P:SOS response"/>
    <property type="evidence" value="ECO:0007669"/>
    <property type="project" value="TreeGrafter"/>
</dbReference>
<dbReference type="GO" id="GO:0006412">
    <property type="term" value="P:translation"/>
    <property type="evidence" value="ECO:0007669"/>
    <property type="project" value="UniProtKB-KW"/>
</dbReference>
<dbReference type="FunFam" id="3.40.50.20:FF:000004">
    <property type="entry name" value="Probable alpha-L-glutamate ligase"/>
    <property type="match status" value="1"/>
</dbReference>
<dbReference type="FunFam" id="3.30.1490.20:FF:000005">
    <property type="entry name" value="Probable alpha-L-glutamate ligase 1"/>
    <property type="match status" value="1"/>
</dbReference>
<dbReference type="FunFam" id="3.30.470.20:FF:000016">
    <property type="entry name" value="Ribosomal protein S6--L-glutamate ligase"/>
    <property type="match status" value="1"/>
</dbReference>
<dbReference type="Gene3D" id="3.40.50.20">
    <property type="match status" value="1"/>
</dbReference>
<dbReference type="Gene3D" id="3.30.1490.20">
    <property type="entry name" value="ATP-grasp fold, A domain"/>
    <property type="match status" value="1"/>
</dbReference>
<dbReference type="Gene3D" id="3.30.470.20">
    <property type="entry name" value="ATP-grasp fold, B domain"/>
    <property type="match status" value="1"/>
</dbReference>
<dbReference type="HAMAP" id="MF_01552">
    <property type="entry name" value="RimK"/>
    <property type="match status" value="1"/>
</dbReference>
<dbReference type="InterPro" id="IPR011761">
    <property type="entry name" value="ATP-grasp"/>
</dbReference>
<dbReference type="InterPro" id="IPR013651">
    <property type="entry name" value="ATP-grasp_RimK-type"/>
</dbReference>
<dbReference type="InterPro" id="IPR013815">
    <property type="entry name" value="ATP_grasp_subdomain_1"/>
</dbReference>
<dbReference type="InterPro" id="IPR023533">
    <property type="entry name" value="RimK"/>
</dbReference>
<dbReference type="InterPro" id="IPR041107">
    <property type="entry name" value="Rimk_N"/>
</dbReference>
<dbReference type="InterPro" id="IPR004666">
    <property type="entry name" value="Rp_bS6_RimK/Lys_biosynth_LsyX"/>
</dbReference>
<dbReference type="NCBIfam" id="NF007764">
    <property type="entry name" value="PRK10446.1"/>
    <property type="match status" value="1"/>
</dbReference>
<dbReference type="NCBIfam" id="TIGR00768">
    <property type="entry name" value="rimK_fam"/>
    <property type="match status" value="1"/>
</dbReference>
<dbReference type="PANTHER" id="PTHR21621:SF7">
    <property type="entry name" value="RIBOSOMAL PROTEIN BS6--L-GLUTAMATE LIGASE"/>
    <property type="match status" value="1"/>
</dbReference>
<dbReference type="PANTHER" id="PTHR21621">
    <property type="entry name" value="RIBOSOMAL PROTEIN S6 MODIFICATION PROTEIN"/>
    <property type="match status" value="1"/>
</dbReference>
<dbReference type="Pfam" id="PF08443">
    <property type="entry name" value="RimK"/>
    <property type="match status" value="1"/>
</dbReference>
<dbReference type="Pfam" id="PF18030">
    <property type="entry name" value="Rimk_N"/>
    <property type="match status" value="1"/>
</dbReference>
<dbReference type="SUPFAM" id="SSF56059">
    <property type="entry name" value="Glutathione synthetase ATP-binding domain-like"/>
    <property type="match status" value="1"/>
</dbReference>
<dbReference type="PROSITE" id="PS50975">
    <property type="entry name" value="ATP_GRASP"/>
    <property type="match status" value="1"/>
</dbReference>
<proteinExistence type="inferred from homology"/>
<evidence type="ECO:0000255" key="1">
    <source>
        <dbReference type="HAMAP-Rule" id="MF_01552"/>
    </source>
</evidence>
<accession>B1X7Z3</accession>
<keyword id="KW-0067">ATP-binding</keyword>
<keyword id="KW-0436">Ligase</keyword>
<keyword id="KW-0460">Magnesium</keyword>
<keyword id="KW-0464">Manganese</keyword>
<keyword id="KW-0479">Metal-binding</keyword>
<keyword id="KW-0547">Nucleotide-binding</keyword>
<keyword id="KW-0648">Protein biosynthesis</keyword>
<reference key="1">
    <citation type="journal article" date="2008" name="J. Bacteriol.">
        <title>The complete genome sequence of Escherichia coli DH10B: insights into the biology of a laboratory workhorse.</title>
        <authorList>
            <person name="Durfee T."/>
            <person name="Nelson R."/>
            <person name="Baldwin S."/>
            <person name="Plunkett G. III"/>
            <person name="Burland V."/>
            <person name="Mau B."/>
            <person name="Petrosino J.F."/>
            <person name="Qin X."/>
            <person name="Muzny D.M."/>
            <person name="Ayele M."/>
            <person name="Gibbs R.A."/>
            <person name="Csorgo B."/>
            <person name="Posfai G."/>
            <person name="Weinstock G.M."/>
            <person name="Blattner F.R."/>
        </authorList>
    </citation>
    <scope>NUCLEOTIDE SEQUENCE [LARGE SCALE GENOMIC DNA]</scope>
    <source>
        <strain>K12 / DH10B</strain>
    </source>
</reference>
<protein>
    <recommendedName>
        <fullName evidence="1">Ribosomal protein bS6--L-glutamate ligase</fullName>
        <ecNumber evidence="1">6.3.2.-</ecNumber>
    </recommendedName>
    <alternativeName>
        <fullName evidence="1">Poly-alpha-glutamate synthase</fullName>
    </alternativeName>
    <alternativeName>
        <fullName evidence="1">Ribosomal protein bS6 modification protein</fullName>
    </alternativeName>
</protein>
<sequence length="300" mass="32436">MKIAILSRDGTLYSCKRLREAAIQRGHLVEILDPLSCYMNINPAASSIHYKGRKLPHFDAVIPRIGTAITFYGTAALRQFEMLGSYPLNESVAIARARDKLRSMQLLARQGIDLPVTGIAHSPDDTSDLIDMVGGAPLVVKLVEGTQGIGVVLAETRQAAESVIDAFRGLNAHILVQEYIKEAQGCDIRCLVVGDEVVAAIERRAKEGDFRSNLHRGGAASVASITPQEREIAIKAARTMALDVAGVDILRANRGPLVMEVNASPGLEGIEKTTGIDIAGKMIRWIERHATTEYCLKTGG</sequence>